<accession>P62963</accession>
<accession>P10924</accession>
<sequence>MAGWNAYIDSLMADGTCQDAAIVGYKDSPSVWAAVPGKTFVSITPAEVGVLVGKDRSSFFVNGLTLGGQKCSVIRDSLLQDGEFTMDLRTKSTGGAPTFNVTVTMTAKTLVLLMGKEGVHGGLINKKCYEMASHLRRSQY</sequence>
<keyword id="KW-0007">Acetylation</keyword>
<keyword id="KW-0009">Actin-binding</keyword>
<keyword id="KW-0963">Cytoplasm</keyword>
<keyword id="KW-0206">Cytoskeleton</keyword>
<keyword id="KW-0903">Direct protein sequencing</keyword>
<keyword id="KW-1017">Isopeptide bond</keyword>
<keyword id="KW-0597">Phosphoprotein</keyword>
<keyword id="KW-1185">Reference proteome</keyword>
<keyword id="KW-0832">Ubl conjugation</keyword>
<organism>
    <name type="scientific">Rattus norvegicus</name>
    <name type="common">Rat</name>
    <dbReference type="NCBI Taxonomy" id="10116"/>
    <lineage>
        <taxon>Eukaryota</taxon>
        <taxon>Metazoa</taxon>
        <taxon>Chordata</taxon>
        <taxon>Craniata</taxon>
        <taxon>Vertebrata</taxon>
        <taxon>Euteleostomi</taxon>
        <taxon>Mammalia</taxon>
        <taxon>Eutheria</taxon>
        <taxon>Euarchontoglires</taxon>
        <taxon>Glires</taxon>
        <taxon>Rodentia</taxon>
        <taxon>Myomorpha</taxon>
        <taxon>Muroidea</taxon>
        <taxon>Muridae</taxon>
        <taxon>Murinae</taxon>
        <taxon>Rattus</taxon>
    </lineage>
</organism>
<proteinExistence type="evidence at protein level"/>
<evidence type="ECO:0000250" key="1">
    <source>
        <dbReference type="UniProtKB" id="P02584"/>
    </source>
</evidence>
<evidence type="ECO:0000250" key="2">
    <source>
        <dbReference type="UniProtKB" id="P07737"/>
    </source>
</evidence>
<evidence type="ECO:0000305" key="3"/>
<evidence type="ECO:0007744" key="4">
    <source>
    </source>
</evidence>
<protein>
    <recommendedName>
        <fullName>Profilin-1</fullName>
    </recommendedName>
    <alternativeName>
        <fullName>Profilin I</fullName>
    </alternativeName>
</protein>
<reference key="1">
    <citation type="journal article" date="1996" name="Biochem. Biophys. Res. Commun.">
        <title>Enhanced glomerular profilin gene and protein expression in experimental mesangial proliferative glomerulonephritis.</title>
        <authorList>
            <person name="Tamura M."/>
            <person name="Tanaka H."/>
            <person name="Hirano T."/>
            <person name="Ueta Y."/>
            <person name="Higashi K."/>
            <person name="Hirano H."/>
        </authorList>
    </citation>
    <scope>NUCLEOTIDE SEQUENCE [MRNA]</scope>
    <source>
        <strain>Sprague-Dawley</strain>
        <tissue>Kidney</tissue>
    </source>
</reference>
<reference key="2">
    <citation type="journal article" date="2004" name="Genome Res.">
        <title>The status, quality, and expansion of the NIH full-length cDNA project: the Mammalian Gene Collection (MGC).</title>
        <authorList>
            <consortium name="The MGC Project Team"/>
        </authorList>
    </citation>
    <scope>NUCLEOTIDE SEQUENCE [LARGE SCALE MRNA]</scope>
    <source>
        <tissue>Prostate</tissue>
    </source>
</reference>
<reference key="3">
    <citation type="submission" date="2007-04" db="UniProtKB">
        <authorList>
            <person name="Lubec G."/>
            <person name="Afjehi-Sadat L."/>
            <person name="Chen W.-Q."/>
        </authorList>
    </citation>
    <scope>PROTEIN SEQUENCE OF 39-54; 57-70 AND 76-89</scope>
    <scope>IDENTIFICATION BY MASS SPECTROMETRY</scope>
    <source>
        <strain>Sprague-Dawley</strain>
        <tissue>Hippocampus</tissue>
        <tissue>Spinal cord</tissue>
    </source>
</reference>
<reference key="4">
    <citation type="journal article" date="2012" name="Nat. Commun.">
        <title>Quantitative maps of protein phosphorylation sites across 14 different rat organs and tissues.</title>
        <authorList>
            <person name="Lundby A."/>
            <person name="Secher A."/>
            <person name="Lage K."/>
            <person name="Nordsborg N.B."/>
            <person name="Dmytriyev A."/>
            <person name="Lundby C."/>
            <person name="Olsen J.V."/>
        </authorList>
    </citation>
    <scope>PHOSPHORYLATION [LARGE SCALE ANALYSIS] AT SER-28</scope>
    <scope>IDENTIFICATION BY MASS SPECTROMETRY [LARGE SCALE ANALYSIS]</scope>
</reference>
<gene>
    <name type="primary">Pfn1</name>
</gene>
<name>PROF1_RAT</name>
<dbReference type="EMBL" id="X96967">
    <property type="protein sequence ID" value="CAA65655.1"/>
    <property type="molecule type" value="mRNA"/>
</dbReference>
<dbReference type="EMBL" id="BC062405">
    <property type="protein sequence ID" value="AAH62405.1"/>
    <property type="molecule type" value="mRNA"/>
</dbReference>
<dbReference type="PIR" id="PC4172">
    <property type="entry name" value="PC4172"/>
</dbReference>
<dbReference type="RefSeq" id="NP_071956.2">
    <property type="nucleotide sequence ID" value="NM_022511.2"/>
</dbReference>
<dbReference type="SMR" id="P62963"/>
<dbReference type="BioGRID" id="249018">
    <property type="interactions" value="6"/>
</dbReference>
<dbReference type="FunCoup" id="P62963">
    <property type="interactions" value="1200"/>
</dbReference>
<dbReference type="IntAct" id="P62963">
    <property type="interactions" value="3"/>
</dbReference>
<dbReference type="MINT" id="P62963"/>
<dbReference type="STRING" id="10116.ENSRNOP00000005370"/>
<dbReference type="iPTMnet" id="P62963"/>
<dbReference type="PhosphoSitePlus" id="P62963"/>
<dbReference type="SwissPalm" id="P62963"/>
<dbReference type="jPOST" id="P62963"/>
<dbReference type="PaxDb" id="10116-ENSRNOP00000005370"/>
<dbReference type="Ensembl" id="ENSRNOT00000005370.7">
    <property type="protein sequence ID" value="ENSRNOP00000005370.3"/>
    <property type="gene ID" value="ENSRNOG00000003975.7"/>
</dbReference>
<dbReference type="GeneID" id="64303"/>
<dbReference type="KEGG" id="rno:64303"/>
<dbReference type="UCSC" id="RGD:621825">
    <property type="organism name" value="rat"/>
</dbReference>
<dbReference type="AGR" id="RGD:621825"/>
<dbReference type="CTD" id="5216"/>
<dbReference type="RGD" id="621825">
    <property type="gene designation" value="Pfn1"/>
</dbReference>
<dbReference type="eggNOG" id="KOG1755">
    <property type="taxonomic scope" value="Eukaryota"/>
</dbReference>
<dbReference type="GeneTree" id="ENSGT00940000153664"/>
<dbReference type="HOGENOM" id="CLU_123405_1_0_1"/>
<dbReference type="InParanoid" id="P62963"/>
<dbReference type="OrthoDB" id="6190at9989"/>
<dbReference type="PhylomeDB" id="P62963"/>
<dbReference type="TreeFam" id="TF331744"/>
<dbReference type="Reactome" id="R-RNO-4086400">
    <property type="pathway name" value="PCP/CE pathway"/>
</dbReference>
<dbReference type="Reactome" id="R-RNO-5663220">
    <property type="pathway name" value="RHO GTPases Activate Formins"/>
</dbReference>
<dbReference type="PRO" id="PR:P62963"/>
<dbReference type="Proteomes" id="UP000002494">
    <property type="component" value="Chromosome 10"/>
</dbReference>
<dbReference type="Bgee" id="ENSRNOG00000003975">
    <property type="expression patterns" value="Expressed in thymus and 19 other cell types or tissues"/>
</dbReference>
<dbReference type="GO" id="GO:0005938">
    <property type="term" value="C:cell cortex"/>
    <property type="evidence" value="ECO:0000266"/>
    <property type="project" value="RGD"/>
</dbReference>
<dbReference type="GO" id="GO:0005737">
    <property type="term" value="C:cytoplasm"/>
    <property type="evidence" value="ECO:0000266"/>
    <property type="project" value="RGD"/>
</dbReference>
<dbReference type="GO" id="GO:0005856">
    <property type="term" value="C:cytoskeleton"/>
    <property type="evidence" value="ECO:0007669"/>
    <property type="project" value="UniProtKB-SubCell"/>
</dbReference>
<dbReference type="GO" id="GO:0098978">
    <property type="term" value="C:glutamatergic synapse"/>
    <property type="evidence" value="ECO:0000266"/>
    <property type="project" value="RGD"/>
</dbReference>
<dbReference type="GO" id="GO:0005634">
    <property type="term" value="C:nucleus"/>
    <property type="evidence" value="ECO:0000266"/>
    <property type="project" value="RGD"/>
</dbReference>
<dbReference type="GO" id="GO:0098688">
    <property type="term" value="C:parallel fiber to Purkinje cell synapse"/>
    <property type="evidence" value="ECO:0000314"/>
    <property type="project" value="SynGO"/>
</dbReference>
<dbReference type="GO" id="GO:0098794">
    <property type="term" value="C:postsynapse"/>
    <property type="evidence" value="ECO:0000314"/>
    <property type="project" value="SynGO"/>
</dbReference>
<dbReference type="GO" id="GO:0098793">
    <property type="term" value="C:presynapse"/>
    <property type="evidence" value="ECO:0000314"/>
    <property type="project" value="SynGO"/>
</dbReference>
<dbReference type="GO" id="GO:0098685">
    <property type="term" value="C:Schaffer collateral - CA1 synapse"/>
    <property type="evidence" value="ECO:0000314"/>
    <property type="project" value="SynGO"/>
</dbReference>
<dbReference type="GO" id="GO:0003779">
    <property type="term" value="F:actin binding"/>
    <property type="evidence" value="ECO:0000266"/>
    <property type="project" value="RGD"/>
</dbReference>
<dbReference type="GO" id="GO:0003785">
    <property type="term" value="F:actin monomer binding"/>
    <property type="evidence" value="ECO:0000266"/>
    <property type="project" value="RGD"/>
</dbReference>
<dbReference type="GO" id="GO:0000774">
    <property type="term" value="F:adenyl-nucleotide exchange factor activity"/>
    <property type="evidence" value="ECO:0000266"/>
    <property type="project" value="RGD"/>
</dbReference>
<dbReference type="GO" id="GO:0005546">
    <property type="term" value="F:phosphatidylinositol-4,5-bisphosphate binding"/>
    <property type="evidence" value="ECO:0000314"/>
    <property type="project" value="RGD"/>
</dbReference>
<dbReference type="GO" id="GO:0001784">
    <property type="term" value="F:phosphotyrosine residue binding"/>
    <property type="evidence" value="ECO:0000266"/>
    <property type="project" value="RGD"/>
</dbReference>
<dbReference type="GO" id="GO:0070064">
    <property type="term" value="F:proline-rich region binding"/>
    <property type="evidence" value="ECO:0000266"/>
    <property type="project" value="RGD"/>
</dbReference>
<dbReference type="GO" id="GO:0005102">
    <property type="term" value="F:signaling receptor binding"/>
    <property type="evidence" value="ECO:0000314"/>
    <property type="project" value="RGD"/>
</dbReference>
<dbReference type="GO" id="GO:0031267">
    <property type="term" value="F:small GTPase binding"/>
    <property type="evidence" value="ECO:0000266"/>
    <property type="project" value="RGD"/>
</dbReference>
<dbReference type="GO" id="GO:0008154">
    <property type="term" value="P:actin polymerization or depolymerization"/>
    <property type="evidence" value="ECO:0000304"/>
    <property type="project" value="RGD"/>
</dbReference>
<dbReference type="GO" id="GO:0071363">
    <property type="term" value="P:cellular response to growth factor stimulus"/>
    <property type="evidence" value="ECO:0000270"/>
    <property type="project" value="RGD"/>
</dbReference>
<dbReference type="GO" id="GO:0098885">
    <property type="term" value="P:modification of postsynaptic actin cytoskeleton"/>
    <property type="evidence" value="ECO:0000266"/>
    <property type="project" value="RGD"/>
</dbReference>
<dbReference type="GO" id="GO:0050804">
    <property type="term" value="P:modulation of chemical synaptic transmission"/>
    <property type="evidence" value="ECO:0000266"/>
    <property type="project" value="RGD"/>
</dbReference>
<dbReference type="GO" id="GO:0032232">
    <property type="term" value="P:negative regulation of actin filament bundle assembly"/>
    <property type="evidence" value="ECO:0000266"/>
    <property type="project" value="RGD"/>
</dbReference>
<dbReference type="GO" id="GO:0030837">
    <property type="term" value="P:negative regulation of actin filament polymerization"/>
    <property type="evidence" value="ECO:0000266"/>
    <property type="project" value="RGD"/>
</dbReference>
<dbReference type="GO" id="GO:0051497">
    <property type="term" value="P:negative regulation of stress fiber assembly"/>
    <property type="evidence" value="ECO:0000266"/>
    <property type="project" value="RGD"/>
</dbReference>
<dbReference type="GO" id="GO:0001843">
    <property type="term" value="P:neural tube closure"/>
    <property type="evidence" value="ECO:0000266"/>
    <property type="project" value="RGD"/>
</dbReference>
<dbReference type="GO" id="GO:0032233">
    <property type="term" value="P:positive regulation of actin filament bundle assembly"/>
    <property type="evidence" value="ECO:0000318"/>
    <property type="project" value="GO_Central"/>
</dbReference>
<dbReference type="GO" id="GO:0030838">
    <property type="term" value="P:positive regulation of actin filament polymerization"/>
    <property type="evidence" value="ECO:0000266"/>
    <property type="project" value="RGD"/>
</dbReference>
<dbReference type="GO" id="GO:0051054">
    <property type="term" value="P:positive regulation of DNA metabolic process"/>
    <property type="evidence" value="ECO:0000314"/>
    <property type="project" value="RGD"/>
</dbReference>
<dbReference type="GO" id="GO:0010634">
    <property type="term" value="P:positive regulation of epithelial cell migration"/>
    <property type="evidence" value="ECO:0000266"/>
    <property type="project" value="RGD"/>
</dbReference>
<dbReference type="GO" id="GO:1900029">
    <property type="term" value="P:positive regulation of ruffle assembly"/>
    <property type="evidence" value="ECO:0000266"/>
    <property type="project" value="RGD"/>
</dbReference>
<dbReference type="GO" id="GO:0051496">
    <property type="term" value="P:positive regulation of stress fiber assembly"/>
    <property type="evidence" value="ECO:0000315"/>
    <property type="project" value="RGD"/>
</dbReference>
<dbReference type="GO" id="GO:0045944">
    <property type="term" value="P:positive regulation of transcription by RNA polymerase II"/>
    <property type="evidence" value="ECO:0000314"/>
    <property type="project" value="RGD"/>
</dbReference>
<dbReference type="GO" id="GO:0050434">
    <property type="term" value="P:positive regulation of viral transcription"/>
    <property type="evidence" value="ECO:0000315"/>
    <property type="project" value="RGD"/>
</dbReference>
<dbReference type="GO" id="GO:0050821">
    <property type="term" value="P:protein stabilization"/>
    <property type="evidence" value="ECO:0000266"/>
    <property type="project" value="RGD"/>
</dbReference>
<dbReference type="GO" id="GO:0030833">
    <property type="term" value="P:regulation of actin filament polymerization"/>
    <property type="evidence" value="ECO:0000318"/>
    <property type="project" value="GO_Central"/>
</dbReference>
<dbReference type="GO" id="GO:0006357">
    <property type="term" value="P:regulation of transcription by RNA polymerase II"/>
    <property type="evidence" value="ECO:0000266"/>
    <property type="project" value="RGD"/>
</dbReference>
<dbReference type="GO" id="GO:1904772">
    <property type="term" value="P:response to tetrachloromethane"/>
    <property type="evidence" value="ECO:0000270"/>
    <property type="project" value="RGD"/>
</dbReference>
<dbReference type="GO" id="GO:0060074">
    <property type="term" value="P:synapse maturation"/>
    <property type="evidence" value="ECO:0000266"/>
    <property type="project" value="RGD"/>
</dbReference>
<dbReference type="CDD" id="cd00148">
    <property type="entry name" value="PROF"/>
    <property type="match status" value="1"/>
</dbReference>
<dbReference type="FunFam" id="3.30.450.30:FF:000008">
    <property type="entry name" value="Profilin"/>
    <property type="match status" value="1"/>
</dbReference>
<dbReference type="Gene3D" id="3.30.450.30">
    <property type="entry name" value="Dynein light chain 2a, cytoplasmic"/>
    <property type="match status" value="1"/>
</dbReference>
<dbReference type="InterPro" id="IPR048278">
    <property type="entry name" value="PFN"/>
</dbReference>
<dbReference type="InterPro" id="IPR005455">
    <property type="entry name" value="PFN_euk"/>
</dbReference>
<dbReference type="InterPro" id="IPR036140">
    <property type="entry name" value="PFN_sf"/>
</dbReference>
<dbReference type="InterPro" id="IPR005454">
    <property type="entry name" value="Profilin1/2/3_vertebrate"/>
</dbReference>
<dbReference type="InterPro" id="IPR027310">
    <property type="entry name" value="Profilin_CS"/>
</dbReference>
<dbReference type="PANTHER" id="PTHR13936">
    <property type="entry name" value="PROFILIN"/>
    <property type="match status" value="1"/>
</dbReference>
<dbReference type="PANTHER" id="PTHR13936:SF14">
    <property type="entry name" value="PROFILIN-1"/>
    <property type="match status" value="1"/>
</dbReference>
<dbReference type="Pfam" id="PF00235">
    <property type="entry name" value="Profilin"/>
    <property type="match status" value="1"/>
</dbReference>
<dbReference type="PRINTS" id="PR01639">
    <property type="entry name" value="PROFILINMAML"/>
</dbReference>
<dbReference type="SMART" id="SM00392">
    <property type="entry name" value="PROF"/>
    <property type="match status" value="1"/>
</dbReference>
<dbReference type="SUPFAM" id="SSF55770">
    <property type="entry name" value="Profilin (actin-binding protein)"/>
    <property type="match status" value="1"/>
</dbReference>
<dbReference type="PROSITE" id="PS00414">
    <property type="entry name" value="PROFILIN"/>
    <property type="match status" value="1"/>
</dbReference>
<feature type="initiator methionine" description="Removed" evidence="1">
    <location>
        <position position="1"/>
    </location>
</feature>
<feature type="chain" id="PRO_0000199573" description="Profilin-1">
    <location>
        <begin position="2"/>
        <end position="140"/>
    </location>
</feature>
<feature type="modified residue" description="N-acetylalanine" evidence="1">
    <location>
        <position position="2"/>
    </location>
</feature>
<feature type="modified residue" description="Phosphoserine" evidence="4">
    <location>
        <position position="28"/>
    </location>
</feature>
<feature type="modified residue" description="Phosphoserine" evidence="2">
    <location>
        <position position="57"/>
    </location>
</feature>
<feature type="modified residue" description="N6-acetyllysine" evidence="2">
    <location>
        <position position="108"/>
    </location>
</feature>
<feature type="modified residue" description="Phosphotyrosine" evidence="2">
    <location>
        <position position="129"/>
    </location>
</feature>
<feature type="modified residue" description="Phosphoserine; by ROCK1" evidence="2">
    <location>
        <position position="138"/>
    </location>
</feature>
<feature type="cross-link" description="Glycyl lysine isopeptide (Lys-Gly) (interchain with G-Cter in SUMO2); alternate" evidence="2">
    <location>
        <position position="54"/>
    </location>
</feature>
<feature type="cross-link" description="Glycyl lysine isopeptide (Lys-Gly) (interchain with G-Cter in ubiquitin); alternate" evidence="2">
    <location>
        <position position="54"/>
    </location>
</feature>
<comment type="function">
    <text evidence="2">Binds to actin and affects the structure of the cytoskeleton. At high concentrations, profilin prevents the polymerization of actin, whereas it enhances it at low concentrations. By binding to PIP2, it inhibits the formation of IP3 and DG. Inhibits androgen receptor (AR) and HTT aggregation and binding of G-actin is essential for its inhibition of AR (By similarity).</text>
</comment>
<comment type="subunit">
    <text evidence="2">Found in a complex with XPO6, Ran, ACTB and PFN1 (By similarity). Interacts with ACTB (By similarity). Interacts with VASP (By similarity). Interacts with HTT (By similarity). Interacts with SH3BGRL (By similarity). Occurs in many kinds of cells as a complex with monomeric actin in a 1:1 ratio (By similarity). Interacts with ACTMAP (By similarity).</text>
</comment>
<comment type="subcellular location">
    <subcellularLocation>
        <location>Cytoplasm</location>
        <location>Cytoskeleton</location>
    </subcellularLocation>
</comment>
<comment type="PTM">
    <text evidence="2">Phosphorylation at Ser-138 reduces its affinity for G-actin and blocks its interaction with HTT, reducing its ability to inhibit androgen receptor (AR) and HTT aggregation.</text>
</comment>
<comment type="similarity">
    <text evidence="3">Belongs to the profilin family.</text>
</comment>